<organism>
    <name type="scientific">Hypocrea jecorina</name>
    <name type="common">Trichoderma reesei</name>
    <dbReference type="NCBI Taxonomy" id="51453"/>
    <lineage>
        <taxon>Eukaryota</taxon>
        <taxon>Fungi</taxon>
        <taxon>Dikarya</taxon>
        <taxon>Ascomycota</taxon>
        <taxon>Pezizomycotina</taxon>
        <taxon>Sordariomycetes</taxon>
        <taxon>Hypocreomycetidae</taxon>
        <taxon>Hypocreales</taxon>
        <taxon>Hypocreaceae</taxon>
        <taxon>Trichoderma</taxon>
    </lineage>
</organism>
<evidence type="ECO:0000250" key="1"/>
<evidence type="ECO:0000269" key="2">
    <source>
    </source>
</evidence>
<evidence type="ECO:0000305" key="3"/>
<accession>Q0QWS4</accession>
<reference key="1">
    <citation type="journal article" date="2006" name="Mol. Microbiol.">
        <title>L-galactonate dehydratase is part of the fungal path for D-galacturonic acid catabolism.</title>
        <authorList>
            <person name="Kuorelahti S."/>
            <person name="Jouhten P."/>
            <person name="Maaheimo H."/>
            <person name="Penttila M."/>
            <person name="Richard P."/>
        </authorList>
    </citation>
    <scope>NUCLEOTIDE SEQUENCE [MRNA]</scope>
    <scope>FUNCTION</scope>
    <scope>CATALYTIC ACTIVITY</scope>
    <scope>COFACTOR</scope>
    <scope>PATHWAY</scope>
    <scope>DISRUPTION PHENOTYPE</scope>
    <source>
        <strain>ATCC 56765 / Rut C-30</strain>
    </source>
</reference>
<keyword id="KW-0119">Carbohydrate metabolism</keyword>
<keyword id="KW-0456">Lyase</keyword>
<keyword id="KW-0460">Magnesium</keyword>
<keyword id="KW-0479">Metal-binding</keyword>
<sequence length="450" mass="50124">MSEVTITGFRSRDVRFPTSLDKTGSDAMNAAGDYSAAYCILETDSAHSGHGMTFTIGRGNDIVCAAINHVADRLKGKKLSSLVADWGKTWRYLVNDSQLRWIGPEKGVIHLALGAVVNAVWDLWAKTLNKPVWRIVADMTPEEYVRCIDFRYITDAITPEEAVAMLREQEAGKAKRIEEALQNRAVPAYTTSAGWLGYGEDKMKQLLRETLAAGYRHFKVKVGGSVEEDRRRLGIAREILGFDKGNVLMVDANQVWSVPEAIDYMKQLSEYKPWFIEEPTSPDDIMGHKAIRDALKPYGIGVATGEMCQNRVMFKQLIMTGAIDICQIDACRLGGVNEVLAVLLMAKKYGVPIVPHSGGVGLPEYTQHLSTIDYVVVSGKLSVLEFVDHLHEHFLHPSVIKDGYYQTPTEAGYSVEMKPESMDKYEYPGKKGVSWWTTDEALPILNGEKI</sequence>
<gene>
    <name type="primary">lgd1</name>
</gene>
<feature type="chain" id="PRO_0000425568" description="L-galactonate dehydratase">
    <location>
        <begin position="1"/>
        <end position="450"/>
    </location>
</feature>
<feature type="active site" evidence="1">
    <location>
        <position position="221"/>
    </location>
</feature>
<feature type="active site" evidence="1">
    <location>
        <position position="356"/>
    </location>
</feature>
<feature type="binding site" evidence="1">
    <location>
        <position position="251"/>
    </location>
    <ligand>
        <name>Mg(2+)</name>
        <dbReference type="ChEBI" id="CHEBI:18420"/>
    </ligand>
</feature>
<feature type="binding site" evidence="1">
    <location>
        <position position="277"/>
    </location>
    <ligand>
        <name>Mg(2+)</name>
        <dbReference type="ChEBI" id="CHEBI:18420"/>
    </ligand>
</feature>
<feature type="binding site" evidence="1">
    <location>
        <position position="306"/>
    </location>
    <ligand>
        <name>Mg(2+)</name>
        <dbReference type="ChEBI" id="CHEBI:18420"/>
    </ligand>
</feature>
<protein>
    <recommendedName>
        <fullName>L-galactonate dehydratase</fullName>
        <ecNumber>4.2.1.146</ecNumber>
    </recommendedName>
</protein>
<comment type="function">
    <text evidence="2">Mediates the conversion of L-galactonate to 2-dehydro-3-deoxy-L-galactonate, the second step in D-galacturonate catabolic process.</text>
</comment>
<comment type="catalytic activity">
    <reaction evidence="2">
        <text>L-galactonate = 2-dehydro-3-deoxy-L-galactonate + H2O</text>
        <dbReference type="Rhea" id="RHEA:38103"/>
        <dbReference type="ChEBI" id="CHEBI:15377"/>
        <dbReference type="ChEBI" id="CHEBI:53071"/>
        <dbReference type="ChEBI" id="CHEBI:75545"/>
        <dbReference type="EC" id="4.2.1.146"/>
    </reaction>
</comment>
<comment type="cofactor">
    <cofactor evidence="1">
        <name>Mg(2+)</name>
        <dbReference type="ChEBI" id="CHEBI:18420"/>
    </cofactor>
    <text evidence="1">Divalent metal ions. Magnesium seems to be the preferred ion.</text>
</comment>
<comment type="pathway">
    <text evidence="2">Carbohydrate acid metabolism.</text>
</comment>
<comment type="disruption phenotype">
    <text evidence="2">Cells are unable to grow on D-galacturonate.</text>
</comment>
<comment type="similarity">
    <text evidence="3">Belongs to the mandelate racemase/muconate lactonizing enzyme family.</text>
</comment>
<dbReference type="EC" id="4.2.1.146"/>
<dbReference type="EMBL" id="DQ181420">
    <property type="protein sequence ID" value="ABA60340.1"/>
    <property type="molecule type" value="mRNA"/>
</dbReference>
<dbReference type="SMR" id="Q0QWS4"/>
<dbReference type="VEuPathDB" id="FungiDB:TrQ_009564"/>
<dbReference type="OMA" id="SGAIDVC"/>
<dbReference type="BioCyc" id="MetaCyc:MONOMER-15604"/>
<dbReference type="BRENDA" id="4.2.1.146">
    <property type="organism ID" value="6451"/>
</dbReference>
<dbReference type="GO" id="GO:0004089">
    <property type="term" value="F:carbonate dehydratase activity"/>
    <property type="evidence" value="ECO:0000314"/>
    <property type="project" value="UniProtKB"/>
</dbReference>
<dbReference type="GO" id="GO:0050023">
    <property type="term" value="F:L-fuconate dehydratase activity"/>
    <property type="evidence" value="ECO:0007669"/>
    <property type="project" value="InterPro"/>
</dbReference>
<dbReference type="GO" id="GO:0000287">
    <property type="term" value="F:magnesium ion binding"/>
    <property type="evidence" value="ECO:0007669"/>
    <property type="project" value="TreeGrafter"/>
</dbReference>
<dbReference type="GO" id="GO:0009063">
    <property type="term" value="P:amino acid catabolic process"/>
    <property type="evidence" value="ECO:0007669"/>
    <property type="project" value="InterPro"/>
</dbReference>
<dbReference type="GO" id="GO:0019698">
    <property type="term" value="P:D-galacturonate catabolic process"/>
    <property type="evidence" value="ECO:0000314"/>
    <property type="project" value="UniProtKB"/>
</dbReference>
<dbReference type="CDD" id="cd03324">
    <property type="entry name" value="rTSbeta_L-fuconate_dehydratase"/>
    <property type="match status" value="1"/>
</dbReference>
<dbReference type="FunFam" id="3.20.20.120:FF:000007">
    <property type="entry name" value="Mitochondrial enolase superfamily member 1"/>
    <property type="match status" value="1"/>
</dbReference>
<dbReference type="FunFam" id="3.30.390.10:FF:000006">
    <property type="entry name" value="Mitochondrial enolase superfamily member 1"/>
    <property type="match status" value="1"/>
</dbReference>
<dbReference type="Gene3D" id="3.20.20.120">
    <property type="entry name" value="Enolase-like C-terminal domain"/>
    <property type="match status" value="1"/>
</dbReference>
<dbReference type="Gene3D" id="3.30.390.10">
    <property type="entry name" value="Enolase-like, N-terminal domain"/>
    <property type="match status" value="1"/>
</dbReference>
<dbReference type="InterPro" id="IPR036849">
    <property type="entry name" value="Enolase-like_C_sf"/>
</dbReference>
<dbReference type="InterPro" id="IPR029017">
    <property type="entry name" value="Enolase-like_N"/>
</dbReference>
<dbReference type="InterPro" id="IPR029065">
    <property type="entry name" value="Enolase_C-like"/>
</dbReference>
<dbReference type="InterPro" id="IPR034610">
    <property type="entry name" value="L-fuconate_dehydratase"/>
</dbReference>
<dbReference type="InterPro" id="IPR018110">
    <property type="entry name" value="Mandel_Rmase/mucon_lact_enz_CS"/>
</dbReference>
<dbReference type="InterPro" id="IPR013342">
    <property type="entry name" value="Mandelate_racemase_C"/>
</dbReference>
<dbReference type="InterPro" id="IPR046945">
    <property type="entry name" value="RHMD-like"/>
</dbReference>
<dbReference type="PANTHER" id="PTHR13794">
    <property type="entry name" value="ENOLASE SUPERFAMILY, MANDELATE RACEMASE"/>
    <property type="match status" value="1"/>
</dbReference>
<dbReference type="PANTHER" id="PTHR13794:SF58">
    <property type="entry name" value="MITOCHONDRIAL ENOLASE SUPERFAMILY MEMBER 1"/>
    <property type="match status" value="1"/>
</dbReference>
<dbReference type="Pfam" id="PF13378">
    <property type="entry name" value="MR_MLE_C"/>
    <property type="match status" value="1"/>
</dbReference>
<dbReference type="SFLD" id="SFLDS00001">
    <property type="entry name" value="Enolase"/>
    <property type="match status" value="1"/>
</dbReference>
<dbReference type="SFLD" id="SFLDF00111">
    <property type="entry name" value="L-fuconate_dehydratase"/>
    <property type="match status" value="1"/>
</dbReference>
<dbReference type="SFLD" id="SFLDF00270">
    <property type="entry name" value="L-galactonate_dehydratase"/>
    <property type="match status" value="1"/>
</dbReference>
<dbReference type="SMART" id="SM00922">
    <property type="entry name" value="MR_MLE"/>
    <property type="match status" value="1"/>
</dbReference>
<dbReference type="SUPFAM" id="SSF51604">
    <property type="entry name" value="Enolase C-terminal domain-like"/>
    <property type="match status" value="1"/>
</dbReference>
<dbReference type="SUPFAM" id="SSF54826">
    <property type="entry name" value="Enolase N-terminal domain-like"/>
    <property type="match status" value="1"/>
</dbReference>
<dbReference type="PROSITE" id="PS00909">
    <property type="entry name" value="MR_MLE_2"/>
    <property type="match status" value="1"/>
</dbReference>
<name>LGD1_HYPJE</name>
<proteinExistence type="evidence at protein level"/>